<evidence type="ECO:0000250" key="1"/>
<evidence type="ECO:0000250" key="2">
    <source>
        <dbReference type="UniProtKB" id="P60170"/>
    </source>
</evidence>
<evidence type="ECO:0000255" key="3"/>
<evidence type="ECO:0000269" key="4">
    <source>
    </source>
</evidence>
<evidence type="ECO:0000305" key="5"/>
<keyword id="KW-0165">Cleavage on pair of basic residues</keyword>
<keyword id="KW-1015">Disulfide bond</keyword>
<keyword id="KW-0325">Glycoprotein</keyword>
<keyword id="KW-0407">Ion channel</keyword>
<keyword id="KW-0406">Ion transport</keyword>
<keyword id="KW-0691">RNA editing</keyword>
<keyword id="KW-0964">Secreted</keyword>
<keyword id="KW-0732">Signal</keyword>
<keyword id="KW-0813">Transport</keyword>
<keyword id="KW-1182">Viral ion channel</keyword>
<organismHost>
    <name type="scientific">Epomops franqueti</name>
    <name type="common">Franquet's epauletted fruit bat</name>
    <name type="synonym">Epomophorus franqueti</name>
    <dbReference type="NCBI Taxonomy" id="77231"/>
</organismHost>
<organismHost>
    <name type="scientific">Homo sapiens</name>
    <name type="common">Human</name>
    <dbReference type="NCBI Taxonomy" id="9606"/>
</organismHost>
<organismHost>
    <name type="scientific">Myonycteris torquata</name>
    <name type="common">Little collared fruit bat</name>
    <dbReference type="NCBI Taxonomy" id="77243"/>
</organismHost>
<comment type="function">
    <molecule>Small/secreted glycoprotein</molecule>
    <text evidence="2">Seems to possess an anti-inflammatory activity as it can reverse the barrier-decreasing effects of TNF alpha. Might therefore contribute to the lack of inflammatory reaction seen during infection in spite the of extensive necrosis and massive virus production. Does not seem to be involved in activation of primary macrophages. Does not seem to interact specifically with neutrophils.</text>
</comment>
<comment type="function">
    <molecule>Delta-peptide</molecule>
    <text evidence="2">Viroporin that permeabilizes mammalian cell plasma membranes. It acts by altering permeation of ionic compounds and small molecules. This activity may lead to viral enterotoxic activity.</text>
</comment>
<comment type="subunit">
    <molecule>Small/secreted glycoprotein</molecule>
    <text evidence="2">Homodimer; disulfide-linked (By similarity). The homodimers are linked by two disulfide bonds in a parallel orientation (By similarity).</text>
</comment>
<comment type="subunit">
    <molecule>Delta-peptide</molecule>
    <text>Monomer.</text>
</comment>
<comment type="subcellular location">
    <molecule>Small/secreted glycoprotein</molecule>
    <subcellularLocation>
        <location evidence="2">Secreted</location>
    </subcellularLocation>
</comment>
<comment type="subcellular location">
    <molecule>Delta-peptide</molecule>
    <subcellularLocation>
        <location evidence="2">Secreted</location>
    </subcellularLocation>
</comment>
<comment type="PTM">
    <molecule>Pre-small/secreted glycoprotein</molecule>
    <text evidence="2">This precursor is processed into mature sGP and delta-peptide by host furin or furin-like proteases. The cleavage site corresponds to the furin optimal cleavage sequence [KR]-X-[KR]-R.</text>
</comment>
<comment type="PTM">
    <molecule>Small/secreted glycoprotein</molecule>
    <text evidence="2">N-glycosylated.</text>
</comment>
<comment type="PTM">
    <molecule>Delta-peptide</molecule>
    <text evidence="2">O-glycosylated.</text>
</comment>
<comment type="RNA editing">
    <location>
        <position position="295" evidence="4"/>
    </location>
    <text>Partially edited. RNA editing at this position consists of an insertion of one or two adenine nucleotides. The sequence displayed here is the small secreted glycoprotein, derived from the unedited RNA. The sequence derived from the +1A edited gives rise to the full-length transmembrane glycoprotein GP (AC P87666), the +2A edited RNA gives rise to the super small secreted glycoprotein ssGP (AC P0C773).</text>
</comment>
<comment type="similarity">
    <text evidence="5">Belongs to the filoviruses glycoprotein family.</text>
</comment>
<sequence>MGVTGILQLPRDRFKRTSFFLWVIILFQRTFSIPLGVIHNSTLQVSDVDKLVCRDKLSSTNQLRSVGLNLEGNGVATDVPSATKRWGFRSGVPPKVVNYEAGEWAENCYNLEIKKPDGSECLPAAPDGIRGFPRCRYVHKVSGTGPCAGDFAFHKEGAFFLYDRLASTVIYRGTTFAEGVVAFLILPQAKKDFFSSHPLREPVNATEDPSSGYYSTTIRYQATGFGTNETEYLFEVDNLTYVQLESRFTPQFLLQLNETIYTSGKRSNTTGKLIWKVNPEIDTTIGEWAFWETKKTSLEKFAVKSCLSQLYQTEPKTSVVRVRRELLPTQGPTQQLKTTKSWLQKIPLQWFKCTVKEGKLQCRI</sequence>
<gene>
    <name type="primary">GP</name>
</gene>
<organism>
    <name type="scientific">Zaire ebolavirus (strain Kikwit-95)</name>
    <name type="common">ZEBOV</name>
    <name type="synonym">Zaire Ebola virus</name>
    <dbReference type="NCBI Taxonomy" id="128951"/>
    <lineage>
        <taxon>Viruses</taxon>
        <taxon>Riboviria</taxon>
        <taxon>Orthornavirae</taxon>
        <taxon>Negarnaviricota</taxon>
        <taxon>Haploviricotina</taxon>
        <taxon>Monjiviricetes</taxon>
        <taxon>Mononegavirales</taxon>
        <taxon>Filoviridae</taxon>
        <taxon>Orthoebolavirus</taxon>
        <taxon>Orthoebolavirus zairense</taxon>
        <taxon>Zaire ebolavirus</taxon>
    </lineage>
</organism>
<name>VSGP_EBOZ5</name>
<reference key="1">
    <citation type="journal article" date="1996" name="Proc. Natl. Acad. Sci. U.S.A.">
        <title>The virion glycoproteins of Ebola viruses are encoded in two reading frames and are expressed through transcriptional editing.</title>
        <authorList>
            <person name="Sanchez A."/>
            <person name="Trappier S.G."/>
            <person name="Mahy B.W.J."/>
            <person name="Peters C.J."/>
            <person name="Nichol S.T."/>
        </authorList>
    </citation>
    <scope>NUCLEOTIDE SEQUENCE [GENOMIC RNA]</scope>
    <scope>RNA EDITING</scope>
</reference>
<reference key="2">
    <citation type="submission" date="2003-07" db="EMBL/GenBank/DDBJ databases">
        <authorList>
            <person name="Chain P.S.G."/>
            <person name="Ichou M.A."/>
            <person name="Malfatti S.A."/>
            <person name="Hajjaj A."/>
            <person name="Vergez L.M."/>
            <person name="Paragas J."/>
            <person name="Do L.H."/>
            <person name="Jahrling P.B."/>
            <person name="Smith K.L."/>
            <person name="McCready P.M."/>
            <person name="Ibrahim M.S."/>
        </authorList>
    </citation>
    <scope>NUCLEOTIDE SEQUENCE [GENOMIC RNA]</scope>
    <source>
        <strain>Isolate Chain</strain>
    </source>
</reference>
<dbReference type="EMBL" id="U28077">
    <property type="protein sequence ID" value="AAB37094.1"/>
    <property type="molecule type" value="Genomic_RNA"/>
</dbReference>
<dbReference type="EMBL" id="AY354458">
    <property type="protein sequence ID" value="AAQ55049.1"/>
    <property type="molecule type" value="Genomic_RNA"/>
</dbReference>
<dbReference type="RefSeq" id="NP_066247.1">
    <property type="nucleotide sequence ID" value="NC_002549.1"/>
</dbReference>
<dbReference type="SMR" id="P60171"/>
<dbReference type="GlyCosmos" id="P60171">
    <property type="glycosylation" value="6 sites, No reported glycans"/>
</dbReference>
<dbReference type="DNASU" id="911829"/>
<dbReference type="GeneID" id="911829"/>
<dbReference type="Proteomes" id="UP000007208">
    <property type="component" value="Genome"/>
</dbReference>
<dbReference type="GO" id="GO:0005576">
    <property type="term" value="C:extracellular region"/>
    <property type="evidence" value="ECO:0007669"/>
    <property type="project" value="UniProtKB-SubCell"/>
</dbReference>
<dbReference type="GO" id="GO:0033644">
    <property type="term" value="C:host cell membrane"/>
    <property type="evidence" value="ECO:0007669"/>
    <property type="project" value="UniProtKB-KW"/>
</dbReference>
<dbReference type="GO" id="GO:0015267">
    <property type="term" value="F:channel activity"/>
    <property type="evidence" value="ECO:0007669"/>
    <property type="project" value="UniProtKB-KW"/>
</dbReference>
<dbReference type="GO" id="GO:0034220">
    <property type="term" value="P:monoatomic ion transmembrane transport"/>
    <property type="evidence" value="ECO:0007669"/>
    <property type="project" value="UniProtKB-KW"/>
</dbReference>
<dbReference type="InterPro" id="IPR014625">
    <property type="entry name" value="GPC_FiloV"/>
</dbReference>
<dbReference type="InterPro" id="IPR002561">
    <property type="entry name" value="GPC_filovir-type_extra_dom"/>
</dbReference>
<dbReference type="Pfam" id="PF01611">
    <property type="entry name" value="Filo_glycop"/>
    <property type="match status" value="1"/>
</dbReference>
<dbReference type="PIRSF" id="PIRSF036874">
    <property type="entry name" value="GPC_FiloV"/>
    <property type="match status" value="1"/>
</dbReference>
<protein>
    <recommendedName>
        <fullName>Pre-small/secreted glycoprotein</fullName>
        <shortName>pre-sGP</shortName>
    </recommendedName>
    <component>
        <recommendedName>
            <fullName>Small/secreted glycoprotein</fullName>
            <shortName>sGP</shortName>
        </recommendedName>
    </component>
    <component>
        <recommendedName>
            <fullName>Delta-peptide</fullName>
        </recommendedName>
    </component>
</protein>
<accession>P60171</accession>
<accession>O12421</accession>
<accession>O12717</accession>
<accession>Q66801</accession>
<accession>Q66819</accession>
<accession>Q6V1Q6</accession>
<accession>Q9YMG3</accession>
<proteinExistence type="inferred from homology"/>
<feature type="signal peptide" evidence="3">
    <location>
        <begin position="1"/>
        <end position="32"/>
    </location>
</feature>
<feature type="chain" id="PRO_0000037509" description="Pre-small/secreted glycoprotein" evidence="1">
    <location>
        <begin position="33"/>
        <end position="364"/>
    </location>
</feature>
<feature type="chain" id="PRO_0000037510" description="Small/secreted glycoprotein" evidence="1">
    <location>
        <begin position="33"/>
        <end position="324"/>
    </location>
</feature>
<feature type="chain" id="PRO_0000037511" description="Delta-peptide" evidence="1">
    <location>
        <begin position="325"/>
        <end position="364"/>
    </location>
</feature>
<feature type="site" description="Cleavage; by host furin" evidence="1">
    <location>
        <begin position="324"/>
        <end position="325"/>
    </location>
</feature>
<feature type="glycosylation site" description="N-linked (GlcNAc...) asparagine; by host" evidence="3">
    <location>
        <position position="40"/>
    </location>
</feature>
<feature type="glycosylation site" description="N-linked (GlcNAc...) asparagine; by host" evidence="3">
    <location>
        <position position="204"/>
    </location>
</feature>
<feature type="glycosylation site" description="N-linked (GlcNAc...) asparagine; by host" evidence="3">
    <location>
        <position position="228"/>
    </location>
</feature>
<feature type="glycosylation site" description="N-linked (GlcNAc...) asparagine; by host" evidence="3">
    <location>
        <position position="238"/>
    </location>
</feature>
<feature type="glycosylation site" description="N-linked (GlcNAc...) asparagine; by host" evidence="3">
    <location>
        <position position="257"/>
    </location>
</feature>
<feature type="glycosylation site" description="N-linked (GlcNAc...) asparagine; by host" evidence="3">
    <location>
        <position position="268"/>
    </location>
</feature>
<feature type="disulfide bond" description="Interchain" evidence="1">
    <location>
        <position position="53"/>
    </location>
</feature>
<feature type="disulfide bond" evidence="1">
    <location>
        <begin position="108"/>
        <end position="135"/>
    </location>
</feature>
<feature type="disulfide bond" evidence="1">
    <location>
        <begin position="121"/>
        <end position="147"/>
    </location>
</feature>
<feature type="disulfide bond" description="Interchain" evidence="1">
    <location>
        <position position="306"/>
    </location>
</feature>
<feature type="sequence variant" description="In strain: Isolate Chain.">
    <original>D</original>
    <variation>E</variation>
    <location>
        <position position="47"/>
    </location>
</feature>